<gene>
    <name evidence="1" type="primary">leuS</name>
    <name type="ordered locus">Pmen_3786</name>
</gene>
<comment type="catalytic activity">
    <reaction evidence="1">
        <text>tRNA(Leu) + L-leucine + ATP = L-leucyl-tRNA(Leu) + AMP + diphosphate</text>
        <dbReference type="Rhea" id="RHEA:11688"/>
        <dbReference type="Rhea" id="RHEA-COMP:9613"/>
        <dbReference type="Rhea" id="RHEA-COMP:9622"/>
        <dbReference type="ChEBI" id="CHEBI:30616"/>
        <dbReference type="ChEBI" id="CHEBI:33019"/>
        <dbReference type="ChEBI" id="CHEBI:57427"/>
        <dbReference type="ChEBI" id="CHEBI:78442"/>
        <dbReference type="ChEBI" id="CHEBI:78494"/>
        <dbReference type="ChEBI" id="CHEBI:456215"/>
        <dbReference type="EC" id="6.1.1.4"/>
    </reaction>
</comment>
<comment type="subcellular location">
    <subcellularLocation>
        <location evidence="1">Cytoplasm</location>
    </subcellularLocation>
</comment>
<comment type="similarity">
    <text evidence="1">Belongs to the class-I aminoacyl-tRNA synthetase family.</text>
</comment>
<comment type="sequence caution" evidence="2">
    <conflict type="erroneous initiation">
        <sequence resource="EMBL-CDS" id="ABP86534"/>
    </conflict>
</comment>
<proteinExistence type="inferred from homology"/>
<keyword id="KW-0030">Aminoacyl-tRNA synthetase</keyword>
<keyword id="KW-0067">ATP-binding</keyword>
<keyword id="KW-0963">Cytoplasm</keyword>
<keyword id="KW-0436">Ligase</keyword>
<keyword id="KW-0547">Nucleotide-binding</keyword>
<keyword id="KW-0648">Protein biosynthesis</keyword>
<sequence length="870" mass="96711">MHEQYSPREIEAAAQSHWDAQKSFVVSEQPGKDTFYCLSMFPYPSGKLHMGHVRNYTIGDVIARYQRMQGKNVLQPMGWDAFGMPAENAAMKNQVAPAKWTYENIAYMKSQLKSLGLAIDWTREVTTCKPDYYRWEQWLFTRLFEKGVIYRKNGTVNWDPVDQTVLANEQVIDGRGWRSGALIEKREIPMYYFKITAYADELLSSLDELDGWPEQVKTMQRNWIGKSFGADIVFDYDVASIGIDGQLKVYSTRPDTLMGATYVAVAAEHPLAQRAAESNPAIAAFIAECKAGSVAEADMATMEKKGLATGQFVIHPLTGDKLPVFVANYVLWGYGEGAVMAVPAHDERDFEFANKYDLPIKQVYTGEGKDYDASTWQDWYGDKAGLTTINSGKYDGLDFSAAFDAIVGDLEASAHGARKTQFRLRDWGISRQRYWGCPIPIIHCDSCGDVPVPEDQLPVVLPEDVVPDGAGSPLAKMPEFYECTCPKCGAPAKRETDTMDTFVESSWYFARYASPNYEGGMVDPQAANHWLPVDQYIGGIEHAILHLLYARFFHKLMRDEGLVSSNEPFKNLLTQGMVVAETYYRTLENGGKDWFNPADVEVERDAKAKVIGAKLKSDGLPVEIGGTEKMSKSKNNGVDPQDMIDAYGADTCRLFMMFASPPDMSCEWSDAGVEGANRFLRRVWRLAHGHVSAGLPGKLDVASLSDEQKAVRRAIHLAIKQASNDIGQHHKFNTAIAQVMTLMNVLEKAATATEQDRALVQEGLEIVTLLLAPITPHISHELWQRLGHADAVIDAQWPQVDESALVQDSLTLVVQVNGKLRGQIEVPASASREDVEAAARANENVLRFTEGLSIRKVIVVPGKLVNIVAN</sequence>
<accession>A4XYW8</accession>
<evidence type="ECO:0000255" key="1">
    <source>
        <dbReference type="HAMAP-Rule" id="MF_00049"/>
    </source>
</evidence>
<evidence type="ECO:0000305" key="2"/>
<feature type="chain" id="PRO_0000334794" description="Leucine--tRNA ligase">
    <location>
        <begin position="1"/>
        <end position="870"/>
    </location>
</feature>
<feature type="short sequence motif" description="'HIGH' region">
    <location>
        <begin position="42"/>
        <end position="52"/>
    </location>
</feature>
<feature type="short sequence motif" description="'KMSKS' region">
    <location>
        <begin position="629"/>
        <end position="633"/>
    </location>
</feature>
<feature type="binding site" evidence="1">
    <location>
        <position position="632"/>
    </location>
    <ligand>
        <name>ATP</name>
        <dbReference type="ChEBI" id="CHEBI:30616"/>
    </ligand>
</feature>
<protein>
    <recommendedName>
        <fullName evidence="1">Leucine--tRNA ligase</fullName>
        <ecNumber evidence="1">6.1.1.4</ecNumber>
    </recommendedName>
    <alternativeName>
        <fullName evidence="1">Leucyl-tRNA synthetase</fullName>
        <shortName evidence="1">LeuRS</shortName>
    </alternativeName>
</protein>
<reference key="1">
    <citation type="submission" date="2007-04" db="EMBL/GenBank/DDBJ databases">
        <title>Complete sequence of Pseudomonas mendocina ymp.</title>
        <authorList>
            <consortium name="US DOE Joint Genome Institute"/>
            <person name="Copeland A."/>
            <person name="Lucas S."/>
            <person name="Lapidus A."/>
            <person name="Barry K."/>
            <person name="Glavina del Rio T."/>
            <person name="Dalin E."/>
            <person name="Tice H."/>
            <person name="Pitluck S."/>
            <person name="Kiss H."/>
            <person name="Brettin T."/>
            <person name="Detter J.C."/>
            <person name="Bruce D."/>
            <person name="Han C."/>
            <person name="Schmutz J."/>
            <person name="Larimer F."/>
            <person name="Land M."/>
            <person name="Hauser L."/>
            <person name="Kyrpides N."/>
            <person name="Mikhailova N."/>
            <person name="Hersman L."/>
            <person name="Dubois J."/>
            <person name="Maurice P."/>
            <person name="Richardson P."/>
        </authorList>
    </citation>
    <scope>NUCLEOTIDE SEQUENCE [LARGE SCALE GENOMIC DNA]</scope>
    <source>
        <strain>ymp</strain>
    </source>
</reference>
<organism>
    <name type="scientific">Ectopseudomonas mendocina (strain ymp)</name>
    <name type="common">Pseudomonas mendocina</name>
    <dbReference type="NCBI Taxonomy" id="399739"/>
    <lineage>
        <taxon>Bacteria</taxon>
        <taxon>Pseudomonadati</taxon>
        <taxon>Pseudomonadota</taxon>
        <taxon>Gammaproteobacteria</taxon>
        <taxon>Pseudomonadales</taxon>
        <taxon>Pseudomonadaceae</taxon>
        <taxon>Ectopseudomonas</taxon>
    </lineage>
</organism>
<name>SYL_ECTM1</name>
<dbReference type="EC" id="6.1.1.4" evidence="1"/>
<dbReference type="EMBL" id="CP000680">
    <property type="protein sequence ID" value="ABP86534.1"/>
    <property type="status" value="ALT_INIT"/>
    <property type="molecule type" value="Genomic_DNA"/>
</dbReference>
<dbReference type="SMR" id="A4XYW8"/>
<dbReference type="STRING" id="399739.Pmen_3786"/>
<dbReference type="KEGG" id="pmy:Pmen_3786"/>
<dbReference type="PATRIC" id="fig|399739.8.peg.3839"/>
<dbReference type="eggNOG" id="COG0495">
    <property type="taxonomic scope" value="Bacteria"/>
</dbReference>
<dbReference type="HOGENOM" id="CLU_004427_0_0_6"/>
<dbReference type="OrthoDB" id="9810365at2"/>
<dbReference type="GO" id="GO:0005829">
    <property type="term" value="C:cytosol"/>
    <property type="evidence" value="ECO:0007669"/>
    <property type="project" value="TreeGrafter"/>
</dbReference>
<dbReference type="GO" id="GO:0002161">
    <property type="term" value="F:aminoacyl-tRNA deacylase activity"/>
    <property type="evidence" value="ECO:0007669"/>
    <property type="project" value="InterPro"/>
</dbReference>
<dbReference type="GO" id="GO:0005524">
    <property type="term" value="F:ATP binding"/>
    <property type="evidence" value="ECO:0007669"/>
    <property type="project" value="UniProtKB-UniRule"/>
</dbReference>
<dbReference type="GO" id="GO:0004823">
    <property type="term" value="F:leucine-tRNA ligase activity"/>
    <property type="evidence" value="ECO:0007669"/>
    <property type="project" value="UniProtKB-UniRule"/>
</dbReference>
<dbReference type="GO" id="GO:0006429">
    <property type="term" value="P:leucyl-tRNA aminoacylation"/>
    <property type="evidence" value="ECO:0007669"/>
    <property type="project" value="UniProtKB-UniRule"/>
</dbReference>
<dbReference type="CDD" id="cd07958">
    <property type="entry name" value="Anticodon_Ia_Leu_BEm"/>
    <property type="match status" value="1"/>
</dbReference>
<dbReference type="CDD" id="cd00812">
    <property type="entry name" value="LeuRS_core"/>
    <property type="match status" value="1"/>
</dbReference>
<dbReference type="FunFam" id="1.10.730.10:FF:000003">
    <property type="entry name" value="Leucine--tRNA ligase"/>
    <property type="match status" value="1"/>
</dbReference>
<dbReference type="FunFam" id="2.20.28.290:FF:000001">
    <property type="entry name" value="Leucine--tRNA ligase"/>
    <property type="match status" value="1"/>
</dbReference>
<dbReference type="FunFam" id="3.10.20.590:FF:000001">
    <property type="entry name" value="Leucine--tRNA ligase"/>
    <property type="match status" value="1"/>
</dbReference>
<dbReference type="FunFam" id="3.40.50.620:FF:000003">
    <property type="entry name" value="Leucine--tRNA ligase"/>
    <property type="match status" value="1"/>
</dbReference>
<dbReference type="FunFam" id="3.40.50.620:FF:000124">
    <property type="entry name" value="Leucine--tRNA ligase"/>
    <property type="match status" value="1"/>
</dbReference>
<dbReference type="FunFam" id="3.90.740.10:FF:000012">
    <property type="entry name" value="Leucine--tRNA ligase"/>
    <property type="match status" value="1"/>
</dbReference>
<dbReference type="Gene3D" id="2.20.28.290">
    <property type="match status" value="1"/>
</dbReference>
<dbReference type="Gene3D" id="3.10.20.590">
    <property type="match status" value="1"/>
</dbReference>
<dbReference type="Gene3D" id="3.40.50.620">
    <property type="entry name" value="HUPs"/>
    <property type="match status" value="2"/>
</dbReference>
<dbReference type="Gene3D" id="1.10.730.10">
    <property type="entry name" value="Isoleucyl-tRNA Synthetase, Domain 1"/>
    <property type="match status" value="2"/>
</dbReference>
<dbReference type="Gene3D" id="3.90.740.10">
    <property type="entry name" value="Valyl/Leucyl/Isoleucyl-tRNA synthetase, editing domain"/>
    <property type="match status" value="1"/>
</dbReference>
<dbReference type="HAMAP" id="MF_00049_B">
    <property type="entry name" value="Leu_tRNA_synth_B"/>
    <property type="match status" value="1"/>
</dbReference>
<dbReference type="InterPro" id="IPR001412">
    <property type="entry name" value="aa-tRNA-synth_I_CS"/>
</dbReference>
<dbReference type="InterPro" id="IPR002300">
    <property type="entry name" value="aa-tRNA-synth_Ia"/>
</dbReference>
<dbReference type="InterPro" id="IPR002302">
    <property type="entry name" value="Leu-tRNA-ligase"/>
</dbReference>
<dbReference type="InterPro" id="IPR025709">
    <property type="entry name" value="Leu_tRNA-synth_edit"/>
</dbReference>
<dbReference type="InterPro" id="IPR013155">
    <property type="entry name" value="M/V/L/I-tRNA-synth_anticd-bd"/>
</dbReference>
<dbReference type="InterPro" id="IPR015413">
    <property type="entry name" value="Methionyl/Leucyl_tRNA_Synth"/>
</dbReference>
<dbReference type="InterPro" id="IPR014729">
    <property type="entry name" value="Rossmann-like_a/b/a_fold"/>
</dbReference>
<dbReference type="InterPro" id="IPR009080">
    <property type="entry name" value="tRNAsynth_Ia_anticodon-bd"/>
</dbReference>
<dbReference type="InterPro" id="IPR009008">
    <property type="entry name" value="Val/Leu/Ile-tRNA-synth_edit"/>
</dbReference>
<dbReference type="NCBIfam" id="TIGR00396">
    <property type="entry name" value="leuS_bact"/>
    <property type="match status" value="1"/>
</dbReference>
<dbReference type="PANTHER" id="PTHR43740:SF2">
    <property type="entry name" value="LEUCINE--TRNA LIGASE, MITOCHONDRIAL"/>
    <property type="match status" value="1"/>
</dbReference>
<dbReference type="PANTHER" id="PTHR43740">
    <property type="entry name" value="LEUCYL-TRNA SYNTHETASE"/>
    <property type="match status" value="1"/>
</dbReference>
<dbReference type="Pfam" id="PF08264">
    <property type="entry name" value="Anticodon_1"/>
    <property type="match status" value="1"/>
</dbReference>
<dbReference type="Pfam" id="PF00133">
    <property type="entry name" value="tRNA-synt_1"/>
    <property type="match status" value="2"/>
</dbReference>
<dbReference type="Pfam" id="PF13603">
    <property type="entry name" value="tRNA-synt_1_2"/>
    <property type="match status" value="1"/>
</dbReference>
<dbReference type="Pfam" id="PF09334">
    <property type="entry name" value="tRNA-synt_1g"/>
    <property type="match status" value="1"/>
</dbReference>
<dbReference type="PRINTS" id="PR00985">
    <property type="entry name" value="TRNASYNTHLEU"/>
</dbReference>
<dbReference type="SUPFAM" id="SSF47323">
    <property type="entry name" value="Anticodon-binding domain of a subclass of class I aminoacyl-tRNA synthetases"/>
    <property type="match status" value="1"/>
</dbReference>
<dbReference type="SUPFAM" id="SSF52374">
    <property type="entry name" value="Nucleotidylyl transferase"/>
    <property type="match status" value="1"/>
</dbReference>
<dbReference type="SUPFAM" id="SSF50677">
    <property type="entry name" value="ValRS/IleRS/LeuRS editing domain"/>
    <property type="match status" value="1"/>
</dbReference>
<dbReference type="PROSITE" id="PS00178">
    <property type="entry name" value="AA_TRNA_LIGASE_I"/>
    <property type="match status" value="1"/>
</dbReference>